<protein>
    <recommendedName>
        <fullName>Virginiamycin A acetyltransferase</fullName>
        <ecNumber>2.3.1.-</ecNumber>
    </recommendedName>
</protein>
<comment type="function">
    <text>Inactivates the A compounds of virginiamycin-like antibiotics, thus providing resistance to these antibiotics.</text>
</comment>
<comment type="similarity">
    <text evidence="2">Belongs to the transferase hexapeptide repeat family.</text>
</comment>
<proteinExistence type="evidence at protein level"/>
<evidence type="ECO:0000250" key="1"/>
<evidence type="ECO:0000305" key="2"/>
<evidence type="ECO:0007829" key="3">
    <source>
        <dbReference type="PDB" id="4HUR"/>
    </source>
</evidence>
<sequence>MNLNNDHGPDPENILPIKGNRNLQFIKPTITNENILVGEYSYYDSKRGESFEDQVLYHYEVIGDKLIIGRFCSIGPGTTFIMNGANHRMDGSTYPFHLFRMGWEKYMPSLKDLPLKGDIEIGNDVWIGRDVTIMPGVKIGDGAIIAAEAVVTKNVAPYSIVGGNPLKFIRKRFSDGVIEEWLALQWWNLDMKIINENLPFIINGDIEMLKRKRKLLDDT</sequence>
<reference key="1">
    <citation type="journal article" date="1993" name="Gene">
        <title>Sequence of a staphylococcal gene, vat, encoding an acetyltransferase inactivating the A-type compounds of virginiamycin-like antibiotics.</title>
        <authorList>
            <person name="Allignet J."/>
            <person name="Loncle V."/>
            <person name="Simenel C."/>
            <person name="Delpierre M."/>
            <person name="el Solh N."/>
        </authorList>
    </citation>
    <scope>NUCLEOTIDE SEQUENCE [GENOMIC DNA]</scope>
</reference>
<reference key="2">
    <citation type="journal article" date="1988" name="Plasmid">
        <title>Nucleotide sequence of a staphylococcal plasmid gene, vgb, encoding a hydrolase inactivating the B components of virginiamycin-like antibiotics.</title>
        <authorList>
            <person name="Allignet J."/>
            <person name="Loncle V."/>
            <person name="Mazodier P."/>
            <person name="El Solh N."/>
        </authorList>
    </citation>
    <scope>NUCLEOTIDE SEQUENCE [GENOMIC DNA] OF 1-112</scope>
</reference>
<keyword id="KW-0002">3D-structure</keyword>
<keyword id="KW-0012">Acyltransferase</keyword>
<keyword id="KW-0046">Antibiotic resistance</keyword>
<keyword id="KW-0614">Plasmid</keyword>
<keyword id="KW-0677">Repeat</keyword>
<keyword id="KW-0808">Transferase</keyword>
<feature type="chain" id="PRO_0000068664" description="Virginiamycin A acetyltransferase">
    <location>
        <begin position="1"/>
        <end position="219"/>
    </location>
</feature>
<feature type="active site" evidence="1">
    <location>
        <position position="87"/>
    </location>
</feature>
<feature type="sequence conflict" description="In Ref. 2." evidence="2" ref="2">
    <original>M</original>
    <variation>L</variation>
    <location>
        <position position="1"/>
    </location>
</feature>
<feature type="strand" evidence="3">
    <location>
        <begin position="21"/>
        <end position="26"/>
    </location>
</feature>
<feature type="helix" evidence="3">
    <location>
        <begin position="27"/>
        <end position="29"/>
    </location>
</feature>
<feature type="strand" evidence="3">
    <location>
        <begin position="35"/>
        <end position="37"/>
    </location>
</feature>
<feature type="strand" evidence="3">
    <location>
        <begin position="42"/>
        <end position="44"/>
    </location>
</feature>
<feature type="strand" evidence="3">
    <location>
        <begin position="46"/>
        <end position="48"/>
    </location>
</feature>
<feature type="helix" evidence="3">
    <location>
        <begin position="51"/>
        <end position="54"/>
    </location>
</feature>
<feature type="strand" evidence="3">
    <location>
        <begin position="55"/>
        <end position="57"/>
    </location>
</feature>
<feature type="turn" evidence="3">
    <location>
        <begin position="60"/>
        <end position="62"/>
    </location>
</feature>
<feature type="strand" evidence="3">
    <location>
        <begin position="66"/>
        <end position="68"/>
    </location>
</feature>
<feature type="strand" evidence="3">
    <location>
        <begin position="79"/>
        <end position="81"/>
    </location>
</feature>
<feature type="helix" evidence="3">
    <location>
        <begin position="83"/>
        <end position="85"/>
    </location>
</feature>
<feature type="helix" evidence="3">
    <location>
        <begin position="96"/>
        <end position="99"/>
    </location>
</feature>
<feature type="helix" evidence="3">
    <location>
        <begin position="103"/>
        <end position="106"/>
    </location>
</feature>
<feature type="helix" evidence="3">
    <location>
        <begin position="110"/>
        <end position="112"/>
    </location>
</feature>
<feature type="strand" evidence="3">
    <location>
        <begin position="119"/>
        <end position="121"/>
    </location>
</feature>
<feature type="strand" evidence="3">
    <location>
        <begin position="159"/>
        <end position="162"/>
    </location>
</feature>
<feature type="turn" evidence="3">
    <location>
        <begin position="163"/>
        <end position="166"/>
    </location>
</feature>
<feature type="strand" evidence="3">
    <location>
        <begin position="167"/>
        <end position="173"/>
    </location>
</feature>
<feature type="helix" evidence="3">
    <location>
        <begin position="175"/>
        <end position="184"/>
    </location>
</feature>
<feature type="helix" evidence="3">
    <location>
        <begin position="186"/>
        <end position="188"/>
    </location>
</feature>
<feature type="helix" evidence="3">
    <location>
        <begin position="191"/>
        <end position="203"/>
    </location>
</feature>
<feature type="helix" evidence="3">
    <location>
        <begin position="206"/>
        <end position="215"/>
    </location>
</feature>
<dbReference type="EC" id="2.3.1.-"/>
<dbReference type="EMBL" id="L07778">
    <property type="protein sequence ID" value="AAA26683.1"/>
    <property type="molecule type" value="Genomic_DNA"/>
</dbReference>
<dbReference type="EMBL" id="M36022">
    <property type="status" value="NOT_ANNOTATED_CDS"/>
    <property type="molecule type" value="Genomic_DNA"/>
</dbReference>
<dbReference type="PIR" id="JN0822">
    <property type="entry name" value="JN0822"/>
</dbReference>
<dbReference type="RefSeq" id="WP_032489635.1">
    <property type="nucleotide sequence ID" value="NG_048537.1"/>
</dbReference>
<dbReference type="PDB" id="4HUR">
    <property type="method" value="X-ray"/>
    <property type="resolution" value="2.15 A"/>
    <property type="chains" value="A/B/C=1-219"/>
</dbReference>
<dbReference type="PDB" id="4HUS">
    <property type="method" value="X-ray"/>
    <property type="resolution" value="2.36 A"/>
    <property type="chains" value="A/B/C=1-219"/>
</dbReference>
<dbReference type="PDB" id="4MYO">
    <property type="method" value="X-ray"/>
    <property type="resolution" value="2.70 A"/>
    <property type="chains" value="A/B/C=7-219"/>
</dbReference>
<dbReference type="PDB" id="6X3C">
    <property type="method" value="X-ray"/>
    <property type="resolution" value="3.05 A"/>
    <property type="chains" value="A/B/C/D/E/F=7-213"/>
</dbReference>
<dbReference type="PDB" id="6X3J">
    <property type="method" value="X-ray"/>
    <property type="resolution" value="2.70 A"/>
    <property type="chains" value="A/B/C/D/E/F=7-215"/>
</dbReference>
<dbReference type="PDBsum" id="4HUR"/>
<dbReference type="PDBsum" id="4HUS"/>
<dbReference type="PDBsum" id="4MYO"/>
<dbReference type="PDBsum" id="6X3C"/>
<dbReference type="PDBsum" id="6X3J"/>
<dbReference type="SMR" id="P26839"/>
<dbReference type="CARD" id="ARO:3002840">
    <property type="molecule name" value="vatA"/>
    <property type="mechanism identifier" value="ARO:0001004"/>
    <property type="mechanism name" value="antibiotic inactivation"/>
</dbReference>
<dbReference type="KEGG" id="ag:AAA26683"/>
<dbReference type="EvolutionaryTrace" id="P26839"/>
<dbReference type="GO" id="GO:0016746">
    <property type="term" value="F:acyltransferase activity"/>
    <property type="evidence" value="ECO:0007669"/>
    <property type="project" value="UniProtKB-KW"/>
</dbReference>
<dbReference type="GO" id="GO:0046677">
    <property type="term" value="P:response to antibiotic"/>
    <property type="evidence" value="ECO:0007669"/>
    <property type="project" value="UniProtKB-KW"/>
</dbReference>
<dbReference type="CDD" id="cd03349">
    <property type="entry name" value="LbH_XAT"/>
    <property type="match status" value="1"/>
</dbReference>
<dbReference type="FunFam" id="2.160.10.10:FF:000037">
    <property type="entry name" value="Streptogramin A acetyltransferase"/>
    <property type="match status" value="1"/>
</dbReference>
<dbReference type="Gene3D" id="2.160.10.10">
    <property type="entry name" value="Hexapeptide repeat proteins"/>
    <property type="match status" value="1"/>
</dbReference>
<dbReference type="InterPro" id="IPR001451">
    <property type="entry name" value="Hexapep"/>
</dbReference>
<dbReference type="InterPro" id="IPR018357">
    <property type="entry name" value="Hexapep_transf_CS"/>
</dbReference>
<dbReference type="InterPro" id="IPR050179">
    <property type="entry name" value="Trans_hexapeptide_repeat"/>
</dbReference>
<dbReference type="InterPro" id="IPR011004">
    <property type="entry name" value="Trimer_LpxA-like_sf"/>
</dbReference>
<dbReference type="NCBIfam" id="NF000101">
    <property type="entry name" value="stregram_VatA"/>
    <property type="match status" value="1"/>
</dbReference>
<dbReference type="NCBIfam" id="NF000311">
    <property type="entry name" value="Vat_ABCDEFH"/>
    <property type="match status" value="1"/>
</dbReference>
<dbReference type="PANTHER" id="PTHR43300">
    <property type="entry name" value="ACETYLTRANSFERASE"/>
    <property type="match status" value="1"/>
</dbReference>
<dbReference type="PANTHER" id="PTHR43300:SF11">
    <property type="entry name" value="ACETYLTRANSFERASE RV3034C-RELATED"/>
    <property type="match status" value="1"/>
</dbReference>
<dbReference type="Pfam" id="PF00132">
    <property type="entry name" value="Hexapep"/>
    <property type="match status" value="1"/>
</dbReference>
<dbReference type="SUPFAM" id="SSF51161">
    <property type="entry name" value="Trimeric LpxA-like enzymes"/>
    <property type="match status" value="1"/>
</dbReference>
<dbReference type="PROSITE" id="PS00101">
    <property type="entry name" value="HEXAPEP_TRANSFERASES"/>
    <property type="match status" value="1"/>
</dbReference>
<organism>
    <name type="scientific">Staphylococcus aureus</name>
    <dbReference type="NCBI Taxonomy" id="1280"/>
    <lineage>
        <taxon>Bacteria</taxon>
        <taxon>Bacillati</taxon>
        <taxon>Bacillota</taxon>
        <taxon>Bacilli</taxon>
        <taxon>Bacillales</taxon>
        <taxon>Staphylococcaceae</taxon>
        <taxon>Staphylococcus</taxon>
    </lineage>
</organism>
<geneLocation type="plasmid">
    <name>pIP630</name>
</geneLocation>
<accession>P26839</accession>
<name>VATA_STAAU</name>
<gene>
    <name type="primary">vat</name>
</gene>